<feature type="transit peptide" description="Mitochondrion" evidence="11">
    <location>
        <begin position="1"/>
        <end position="20"/>
    </location>
</feature>
<feature type="chain" id="PRO_0000280265" description="5-taurinomethyluridine-[tRNA] synthase subunit GTPB3, mitochondrial">
    <location>
        <begin position="21"/>
        <end position="492"/>
    </location>
</feature>
<feature type="domain" description="TrmE-type G">
    <location>
        <begin position="249"/>
        <end position="416"/>
    </location>
</feature>
<feature type="binding site" evidence="16">
    <location>
        <position position="52"/>
    </location>
    <ligand>
        <name>5,10-methylenetetrahydrofolate</name>
        <dbReference type="ChEBI" id="CHEBI:12071"/>
    </ligand>
</feature>
<feature type="binding site" evidence="16">
    <location>
        <position position="112"/>
    </location>
    <ligand>
        <name>5,10-methylenetetrahydrofolate</name>
        <dbReference type="ChEBI" id="CHEBI:12071"/>
    </ligand>
</feature>
<feature type="binding site" evidence="16">
    <location>
        <position position="152"/>
    </location>
    <ligand>
        <name>5,10-methylenetetrahydrofolate</name>
        <dbReference type="ChEBI" id="CHEBI:12071"/>
    </ligand>
</feature>
<feature type="binding site" evidence="2">
    <location>
        <begin position="256"/>
        <end position="263"/>
    </location>
    <ligand>
        <name>GTP</name>
        <dbReference type="ChEBI" id="CHEBI:37565"/>
    </ligand>
</feature>
<feature type="binding site" evidence="1">
    <location>
        <position position="259"/>
    </location>
    <ligand>
        <name>K(+)</name>
        <dbReference type="ChEBI" id="CHEBI:29103"/>
    </ligand>
</feature>
<feature type="binding site" evidence="2">
    <location>
        <position position="263"/>
    </location>
    <ligand>
        <name>Mg(2+)</name>
        <dbReference type="ChEBI" id="CHEBI:18420"/>
    </ligand>
</feature>
<feature type="binding site" evidence="2">
    <location>
        <begin position="282"/>
        <end position="286"/>
    </location>
    <ligand>
        <name>GTP</name>
        <dbReference type="ChEBI" id="CHEBI:37565"/>
    </ligand>
</feature>
<feature type="binding site" evidence="2">
    <location>
        <position position="284"/>
    </location>
    <ligand>
        <name>Mg(2+)</name>
        <dbReference type="ChEBI" id="CHEBI:18420"/>
    </ligand>
</feature>
<feature type="binding site" evidence="2">
    <location>
        <begin position="303"/>
        <end position="306"/>
    </location>
    <ligand>
        <name>GTP</name>
        <dbReference type="ChEBI" id="CHEBI:37565"/>
    </ligand>
</feature>
<feature type="binding site" evidence="2">
    <location>
        <begin position="374"/>
        <end position="377"/>
    </location>
    <ligand>
        <name>GTP</name>
        <dbReference type="ChEBI" id="CHEBI:37565"/>
    </ligand>
</feature>
<feature type="binding site" evidence="2">
    <location>
        <begin position="397"/>
        <end position="399"/>
    </location>
    <ligand>
        <name>GTP</name>
        <dbReference type="ChEBI" id="CHEBI:37565"/>
    </ligand>
</feature>
<feature type="binding site" evidence="16">
    <location>
        <position position="492"/>
    </location>
    <ligand>
        <name>5,10-methylenetetrahydrofolate</name>
        <dbReference type="ChEBI" id="CHEBI:12071"/>
    </ligand>
</feature>
<feature type="splice variant" id="VSP_045050" description="In isoform 4." evidence="13">
    <original>MWRGLWTLAAQAARGPRR</original>
    <variation>MVHSPTCPHPCFLLVPASEPQFPHLQTPDPGDAVWNVRWA</variation>
    <location>
        <begin position="1"/>
        <end position="18"/>
    </location>
</feature>
<feature type="splice variant" id="VSP_023583" description="In isoform 2." evidence="12">
    <original>Q</original>
    <variation>QGGSTWWWGRKTPHISPQRLPSLSLSACLLSPT</variation>
    <location>
        <position position="221"/>
    </location>
</feature>
<feature type="splice variant" id="VSP_023584" description="In isoform 3." evidence="12">
    <location>
        <begin position="325"/>
        <end position="345"/>
    </location>
</feature>
<feature type="sequence variant" id="VAR_073298" description="In COXPD23; uncertain significance; loss of mitochondiral localization; dbSNP:rs1057518138." evidence="8 9 11">
    <original>R</original>
    <variation>L</variation>
    <location>
        <position position="3"/>
    </location>
</feature>
<feature type="sequence variant" id="VAR_073299" description="In COXPD23; dbSNP:rs2074392366." evidence="8">
    <original>E</original>
    <variation>K</variation>
    <location>
        <position position="142"/>
    </location>
</feature>
<feature type="sequence variant" id="VAR_073300" description="In COXPD23; decreased GTPase catalytic efficiency; dbSNP:rs730880255." evidence="8 11">
    <original>E</original>
    <variation>V</variation>
    <location>
        <position position="159"/>
    </location>
</feature>
<feature type="sequence variant" id="VAR_073301" description="In COXPD23; decreased GTPase catalytic efficiency." evidence="8 11">
    <original>A</original>
    <variation>P</variation>
    <location>
        <position position="162"/>
    </location>
</feature>
<feature type="sequence variant" id="VAR_073302" description="In COXPD23; dbSNP:rs373370177." evidence="8">
    <original>A</original>
    <variation>G</variation>
    <location>
        <position position="222"/>
    </location>
</feature>
<feature type="sequence variant" id="VAR_073303" description="In dbSNP:rs778983997." evidence="8">
    <original>E</original>
    <variation>K</variation>
    <location>
        <position position="225"/>
    </location>
</feature>
<feature type="sequence variant" id="VAR_031103" description="In dbSNP:rs3810206." evidence="3 4 5 6 7">
    <original>V</original>
    <variation>A</variation>
    <location>
        <position position="250"/>
    </location>
</feature>
<feature type="sequence variant" id="VAR_073304" description="In COXPD23; strong decrease in GTPase catalytic efficiency." evidence="8 11">
    <original>P</original>
    <variation>H</variation>
    <location>
        <position position="257"/>
    </location>
</feature>
<feature type="sequence variant" id="VAR_073305" description="In COXPD23." evidence="8">
    <location>
        <begin position="312"/>
        <end position="319"/>
    </location>
</feature>
<feature type="sequence variant" id="VAR_073306" description="Strong decrease in GTPase catalytic efficiency; dbSNP:rs372174278." evidence="8 11">
    <original>A</original>
    <variation>P</variation>
    <location>
        <position position="322"/>
    </location>
</feature>
<feature type="sequence variant" id="VAR_073307" description="In COXPD23; dbSNP:rs886037735." evidence="8">
    <original>D</original>
    <variation>H</variation>
    <location>
        <position position="337"/>
    </location>
</feature>
<feature type="sequence variant" id="VAR_031104" description="In dbSNP:rs3745193." evidence="6">
    <original>R</original>
    <variation>H</variation>
    <location>
        <position position="368"/>
    </location>
</feature>
<feature type="sequence variant" id="VAR_073308" description="In COXPD23; small decrease in GTPase catalytic efficiency; dbSNP:rs886037734." evidence="8 11">
    <original>E</original>
    <variation>K</variation>
    <location>
        <position position="459"/>
    </location>
</feature>
<feature type="mutagenesis site" description="Decreased GTPase catalytic efficiency, when associated with K-142." evidence="11">
    <original>R</original>
    <variation>E</variation>
    <location>
        <position position="136"/>
    </location>
</feature>
<feature type="mutagenesis site" description="Decreased GTPase catalytic efficiency, when associated with E-136." evidence="11">
    <original>E</original>
    <variation>K</variation>
    <location>
        <position position="142"/>
    </location>
</feature>
<feature type="mutagenesis site" description="Small decrease in GTPase catalytic efficiency, when associated with E-431." evidence="11">
    <original>E</original>
    <variation>R</variation>
    <location>
        <position position="159"/>
    </location>
</feature>
<feature type="mutagenesis site" description="Decreased GTPase catalytic efficiency, when associated with P-322." evidence="11">
    <original>E</original>
    <variation>K</variation>
    <location>
        <position position="225"/>
    </location>
</feature>
<feature type="mutagenesis site" description="Strong decrease in GTPase catalytic efficiency." evidence="11">
    <original>N</original>
    <variation>A</variation>
    <location>
        <position position="259"/>
    </location>
</feature>
<feature type="mutagenesis site" description="Decreased GTPase catalytic efficiency." evidence="11">
    <original>E</original>
    <variation>A</variation>
    <location>
        <position position="315"/>
    </location>
</feature>
<feature type="mutagenesis site" description="Decreased GTPase catalytic efficiency, when associated with K-225." evidence="11">
    <original>A</original>
    <variation>P</variation>
    <location>
        <position position="322"/>
    </location>
</feature>
<feature type="mutagenesis site" description="Small decrease in GTPase catalytic efficiency, when associated with R-159." evidence="11">
    <original>R</original>
    <variation>E</variation>
    <location>
        <position position="431"/>
    </location>
</feature>
<accession>Q969Y2</accession>
<accession>A6NFH1</accession>
<accession>A6NIG5</accession>
<accession>A6NKR4</accession>
<accession>A8K7B4</accession>
<accession>B7Z4V8</accession>
<accession>Q8TCY6</accession>
<accession>Q8WUW9</accession>
<accession>Q969G4</accession>
<accession>Q9BX61</accession>
<protein>
    <recommendedName>
        <fullName evidence="14">5-taurinomethyluridine-[tRNA] synthase subunit GTPB3, mitochondrial</fullName>
        <ecNumber evidence="10 11">3.6.1.-</ecNumber>
    </recommendedName>
    <alternativeName>
        <fullName evidence="12">GTP-binding protein 3</fullName>
    </alternativeName>
    <alternativeName>
        <fullName>Mitochondrial GTP-binding protein 1</fullName>
    </alternativeName>
    <alternativeName>
        <fullName>tRNA modification GTPase GTPBP3, mitochondrial</fullName>
    </alternativeName>
</protein>
<organism>
    <name type="scientific">Homo sapiens</name>
    <name type="common">Human</name>
    <dbReference type="NCBI Taxonomy" id="9606"/>
    <lineage>
        <taxon>Eukaryota</taxon>
        <taxon>Metazoa</taxon>
        <taxon>Chordata</taxon>
        <taxon>Craniata</taxon>
        <taxon>Vertebrata</taxon>
        <taxon>Euteleostomi</taxon>
        <taxon>Mammalia</taxon>
        <taxon>Eutheria</taxon>
        <taxon>Euarchontoglires</taxon>
        <taxon>Primates</taxon>
        <taxon>Haplorrhini</taxon>
        <taxon>Catarrhini</taxon>
        <taxon>Hominidae</taxon>
        <taxon>Homo</taxon>
    </lineage>
</organism>
<name>GTPB3_HUMAN</name>
<keyword id="KW-0025">Alternative splicing</keyword>
<keyword id="KW-0122">Cardiomyopathy</keyword>
<keyword id="KW-0963">Cytoplasm</keyword>
<keyword id="KW-0903">Direct protein sequencing</keyword>
<keyword id="KW-0225">Disease variant</keyword>
<keyword id="KW-0342">GTP-binding</keyword>
<keyword id="KW-0378">Hydrolase</keyword>
<keyword id="KW-0496">Mitochondrion</keyword>
<keyword id="KW-0547">Nucleotide-binding</keyword>
<keyword id="KW-1274">Primary mitochondrial disease</keyword>
<keyword id="KW-1267">Proteomics identification</keyword>
<keyword id="KW-1185">Reference proteome</keyword>
<keyword id="KW-0809">Transit peptide</keyword>
<keyword id="KW-0819">tRNA processing</keyword>
<proteinExistence type="evidence at protein level"/>
<sequence>MWRGLWTLAAQAARGPRRLCTRRSSGAPAPGSGATIFALSSGQGRCGIAVIRTSGPASGHALRILTAPRDLPLARHASLRLLSDPRSGEPLDRALVLWFPGPQSFTGEDCVEFHVHGGPAVVSGVLQALGSVPGLRPAEAGEFTRRAFANGKLNLTEVEGLADLIHAETEAQRRQALRQLDGELGHLCRGWAETLTKALAHVEAYIDFGEDDNLEEGVLEQADIEVRALQVALGAHLRDARRGQRLRSGVHVVVTGPPNAGKSSLVNLLSRKPVSIVSPEPGTTRDVLETPVDLAGFPVLLSDTAGLREGVGPVEQEGVRRARERLEQADLILAMLDASDLASPSSCNFLATVVASVGAQSPSDSSQRLLLVLNKSDLLSPEGPGPGPDLPPHLLLSCLTGEGLDGLLEALRKELAAVCGDPSTDPPLLTRARHQHHLQGCLDALGHYKQSKDLALAAEALRVARGHLTRLTGGGGTEEILDIIFQDFCVGK</sequence>
<evidence type="ECO:0000250" key="1">
    <source>
        <dbReference type="UniProtKB" id="P25522"/>
    </source>
</evidence>
<evidence type="ECO:0000255" key="2">
    <source>
        <dbReference type="PROSITE-ProRule" id="PRU01046"/>
    </source>
</evidence>
<evidence type="ECO:0000269" key="3">
    <source>
    </source>
</evidence>
<evidence type="ECO:0000269" key="4">
    <source>
    </source>
</evidence>
<evidence type="ECO:0000269" key="5">
    <source>
    </source>
</evidence>
<evidence type="ECO:0000269" key="6">
    <source>
    </source>
</evidence>
<evidence type="ECO:0000269" key="7">
    <source>
    </source>
</evidence>
<evidence type="ECO:0000269" key="8">
    <source>
    </source>
</evidence>
<evidence type="ECO:0000269" key="9">
    <source>
    </source>
</evidence>
<evidence type="ECO:0000269" key="10">
    <source>
    </source>
</evidence>
<evidence type="ECO:0000269" key="11">
    <source>
    </source>
</evidence>
<evidence type="ECO:0000303" key="12">
    <source>
    </source>
</evidence>
<evidence type="ECO:0000303" key="13">
    <source>
    </source>
</evidence>
<evidence type="ECO:0000303" key="14">
    <source>
    </source>
</evidence>
<evidence type="ECO:0000305" key="15"/>
<evidence type="ECO:0000305" key="16">
    <source>
    </source>
</evidence>
<evidence type="ECO:0000305" key="17">
    <source>
    </source>
</evidence>
<evidence type="ECO:0000312" key="18">
    <source>
        <dbReference type="HGNC" id="HGNC:14880"/>
    </source>
</evidence>
<gene>
    <name evidence="18" type="primary">GTPBP3</name>
    <name type="synonym">MTGP1</name>
</gene>
<comment type="function">
    <text evidence="10 11">GTPase component of the GTPBP3-MTO1 complex that catalyzes the 5-taurinomethyluridine (taum(5)U) modification at the 34th wobble position (U34) of mitochondrial tRNAs (mt-tRNAs), which plays a role in mt-tRNA decoding and mitochondrial translation (PubMed:29390138, PubMed:33619562). Taum(5)U formation on mammalian mt-tRNA requires the presence of both GTPBP3-mediated GTPase activity and MTO1 catalytic activity (PubMed:29390138).</text>
</comment>
<comment type="catalytic activity">
    <reaction evidence="10 11">
        <text>GTP + H2O = GDP + phosphate + H(+)</text>
        <dbReference type="Rhea" id="RHEA:19669"/>
        <dbReference type="ChEBI" id="CHEBI:15377"/>
        <dbReference type="ChEBI" id="CHEBI:15378"/>
        <dbReference type="ChEBI" id="CHEBI:37565"/>
        <dbReference type="ChEBI" id="CHEBI:43474"/>
        <dbReference type="ChEBI" id="CHEBI:58189"/>
    </reaction>
    <physiologicalReaction direction="left-to-right" evidence="16 17">
        <dbReference type="Rhea" id="RHEA:19670"/>
    </physiologicalReaction>
</comment>
<comment type="cofactor">
    <cofactor>
        <name>K(+)</name>
        <dbReference type="ChEBI" id="CHEBI:29103"/>
    </cofactor>
    <text evidence="11">Forms a homodimer in the presence of potassium.</text>
</comment>
<comment type="biophysicochemical properties">
    <kinetics>
        <KM evidence="11">9.5 uM for GTP</KM>
        <text evidence="11">kcat is 1.49 min(-1) with GTP as substrate (PubMed:33619562).</text>
    </kinetics>
</comment>
<comment type="subunit">
    <text evidence="10 11">Homodimer; forms a dimer in the presence of potassium (PubMed:33619562). Interacts with MTO1; forms the GTPBP3-MTO1 complex composed of homodimers of GTPBP3 and MTO1 (PubMed:29390138, PubMed:33619562).</text>
</comment>
<comment type="subunit">
    <molecule>Isoform 4</molecule>
    <text evidence="11">Homodimer, forms homodimer in vivo.</text>
</comment>
<comment type="interaction">
    <interactant intactId="EBI-740290">
        <id>Q969Y2</id>
    </interactant>
    <interactant intactId="EBI-712648">
        <id>O95994</id>
        <label>AGR2</label>
    </interactant>
    <organismsDiffer>false</organismsDiffer>
    <experiments>3</experiments>
</comment>
<comment type="interaction">
    <interactant intactId="EBI-740290">
        <id>Q969Y2</id>
    </interactant>
    <interactant intactId="EBI-10181188">
        <id>Q8N7W2-2</id>
        <label>BEND7</label>
    </interactant>
    <organismsDiffer>false</organismsDiffer>
    <experiments>3</experiments>
</comment>
<comment type="interaction">
    <interactant intactId="EBI-740290">
        <id>Q969Y2</id>
    </interactant>
    <interactant intactId="EBI-11532021">
        <id>P20807-4</id>
        <label>CAPN3</label>
    </interactant>
    <organismsDiffer>false</organismsDiffer>
    <experiments>3</experiments>
</comment>
<comment type="interaction">
    <interactant intactId="EBI-740290">
        <id>Q969Y2</id>
    </interactant>
    <interactant intactId="EBI-2874058">
        <id>Q9BV29</id>
        <label>CCDC32</label>
    </interactant>
    <organismsDiffer>false</organismsDiffer>
    <experiments>3</experiments>
</comment>
<comment type="interaction">
    <interactant intactId="EBI-740290">
        <id>Q969Y2</id>
    </interactant>
    <interactant intactId="EBI-594661">
        <id>Q92905</id>
        <label>COPS5</label>
    </interactant>
    <organismsDiffer>false</organismsDiffer>
    <experiments>3</experiments>
</comment>
<comment type="interaction">
    <interactant intactId="EBI-740290">
        <id>Q969Y2</id>
    </interactant>
    <interactant intactId="EBI-742054">
        <id>Q96D03</id>
        <label>DDIT4L</label>
    </interactant>
    <organismsDiffer>false</organismsDiffer>
    <experiments>5</experiments>
</comment>
<comment type="interaction">
    <interactant intactId="EBI-740290">
        <id>Q969Y2</id>
    </interactant>
    <interactant intactId="EBI-710457">
        <id>Q7L190</id>
        <label>DPPA4</label>
    </interactant>
    <organismsDiffer>false</organismsDiffer>
    <experiments>3</experiments>
</comment>
<comment type="interaction">
    <interactant intactId="EBI-740290">
        <id>Q969Y2</id>
    </interactant>
    <interactant intactId="EBI-4291090">
        <id>Q9Y223</id>
        <label>GNE</label>
    </interactant>
    <organismsDiffer>false</organismsDiffer>
    <experiments>3</experiments>
</comment>
<comment type="interaction">
    <interactant intactId="EBI-740290">
        <id>Q969Y2</id>
    </interactant>
    <interactant intactId="EBI-6509505">
        <id>Q0VD86</id>
        <label>INCA1</label>
    </interactant>
    <organismsDiffer>false</organismsDiffer>
    <experiments>3</experiments>
</comment>
<comment type="interaction">
    <interactant intactId="EBI-740290">
        <id>Q969Y2</id>
    </interactant>
    <interactant intactId="EBI-712105">
        <id>Q13352</id>
        <label>ITGB3BP</label>
    </interactant>
    <organismsDiffer>false</organismsDiffer>
    <experiments>3</experiments>
</comment>
<comment type="interaction">
    <interactant intactId="EBI-740290">
        <id>Q969Y2</id>
    </interactant>
    <interactant intactId="EBI-12516603">
        <id>Q8WWY6</id>
        <label>MBD3L1</label>
    </interactant>
    <organismsDiffer>false</organismsDiffer>
    <experiments>3</experiments>
</comment>
<comment type="interaction">
    <interactant intactId="EBI-740290">
        <id>Q969Y2</id>
    </interactant>
    <interactant intactId="EBI-16439278">
        <id>Q6FHY5</id>
        <label>MEOX2</label>
    </interactant>
    <organismsDiffer>false</organismsDiffer>
    <experiments>3</experiments>
</comment>
<comment type="interaction">
    <interactant intactId="EBI-740290">
        <id>Q969Y2</id>
    </interactant>
    <interactant intactId="EBI-6165891">
        <id>Q14696</id>
        <label>MESD</label>
    </interactant>
    <organismsDiffer>false</organismsDiffer>
    <experiments>3</experiments>
</comment>
<comment type="interaction">
    <interactant intactId="EBI-740290">
        <id>Q969Y2</id>
    </interactant>
    <interactant intactId="EBI-17644640">
        <id>Q9NR21-1</id>
        <label>PARP11</label>
    </interactant>
    <organismsDiffer>false</organismsDiffer>
    <experiments>7</experiments>
</comment>
<comment type="interaction">
    <interactant intactId="EBI-740290">
        <id>Q969Y2</id>
    </interactant>
    <interactant intactId="EBI-487243">
        <id>P17858</id>
        <label>PFKL</label>
    </interactant>
    <organismsDiffer>false</organismsDiffer>
    <experiments>3</experiments>
</comment>
<comment type="interaction">
    <interactant intactId="EBI-740290">
        <id>Q969Y2</id>
    </interactant>
    <interactant intactId="EBI-10276663">
        <id>Q8WUT1</id>
        <label>POLDIP3</label>
    </interactant>
    <organismsDiffer>false</organismsDiffer>
    <experiments>3</experiments>
</comment>
<comment type="interaction">
    <interactant intactId="EBI-740290">
        <id>Q969Y2</id>
    </interactant>
    <interactant intactId="EBI-2557469">
        <id>Q6NYC8</id>
        <label>PPP1R18</label>
    </interactant>
    <organismsDiffer>false</organismsDiffer>
    <experiments>3</experiments>
</comment>
<comment type="interaction">
    <interactant intactId="EBI-740290">
        <id>Q969Y2</id>
    </interactant>
    <interactant intactId="EBI-9512693">
        <id>Q53GL6</id>
        <label>RALY</label>
    </interactant>
    <organismsDiffer>false</organismsDiffer>
    <experiments>5</experiments>
</comment>
<comment type="interaction">
    <interactant intactId="EBI-740290">
        <id>Q969Y2</id>
    </interactant>
    <interactant intactId="EBI-948278">
        <id>Q15293</id>
        <label>RCN1</label>
    </interactant>
    <organismsDiffer>false</organismsDiffer>
    <experiments>3</experiments>
</comment>
<comment type="interaction">
    <interactant intactId="EBI-740290">
        <id>Q969Y2</id>
    </interactant>
    <interactant intactId="EBI-748621">
        <id>Q9UJW9</id>
        <label>SERTAD3</label>
    </interactant>
    <organismsDiffer>false</organismsDiffer>
    <experiments>3</experiments>
</comment>
<comment type="interaction">
    <interactant intactId="EBI-740290">
        <id>Q969Y2</id>
    </interactant>
    <interactant intactId="EBI-372899">
        <id>Q13148</id>
        <label>TARDBP</label>
    </interactant>
    <organismsDiffer>false</organismsDiffer>
    <experiments>6</experiments>
</comment>
<comment type="interaction">
    <interactant intactId="EBI-740290">
        <id>Q969Y2</id>
    </interactant>
    <interactant intactId="EBI-13092532">
        <id>Q6DHY5</id>
        <label>TBC1D3G</label>
    </interactant>
    <organismsDiffer>false</organismsDiffer>
    <experiments>3</experiments>
</comment>
<comment type="interaction">
    <interactant intactId="EBI-740290">
        <id>Q969Y2</id>
    </interactant>
    <interactant intactId="EBI-11952764">
        <id>Q99081-3</id>
        <label>TCF12</label>
    </interactant>
    <organismsDiffer>false</organismsDiffer>
    <experiments>3</experiments>
</comment>
<comment type="interaction">
    <interactant intactId="EBI-740290">
        <id>Q969Y2</id>
    </interactant>
    <interactant intactId="EBI-11419867">
        <id>Q8TF47</id>
        <label>ZFP90</label>
    </interactant>
    <organismsDiffer>false</organismsDiffer>
    <experiments>3</experiments>
</comment>
<comment type="interaction">
    <interactant intactId="EBI-740290">
        <id>Q969Y2</id>
    </interactant>
    <interactant intactId="EBI-12310821">
        <id>Q9UC07-2</id>
        <label>ZNF69</label>
    </interactant>
    <organismsDiffer>false</organismsDiffer>
    <experiments>3</experiments>
</comment>
<comment type="interaction">
    <interactant intactId="EBI-740290">
        <id>Q969Y2</id>
    </interactant>
    <interactant intactId="EBI-10251462">
        <id>Q6NX45</id>
        <label>ZNF774</label>
    </interactant>
    <organismsDiffer>false</organismsDiffer>
    <experiments>3</experiments>
</comment>
<comment type="subcellular location">
    <subcellularLocation>
        <location evidence="3 11">Mitochondrion</location>
    </subcellularLocation>
</comment>
<comment type="subcellular location">
    <molecule>Isoform 4</molecule>
    <subcellularLocation>
        <location evidence="11">Cytoplasm</location>
    </subcellularLocation>
</comment>
<comment type="alternative products">
    <event type="alternative splicing"/>
    <isoform>
        <id>Q969Y2-1</id>
        <name>1</name>
        <name>V</name>
        <sequence type="displayed"/>
    </isoform>
    <isoform>
        <id>Q969Y2-2</id>
        <name>2</name>
        <sequence type="described" ref="VSP_023583"/>
    </isoform>
    <isoform>
        <id>Q969Y2-3</id>
        <name>3</name>
        <name>IV</name>
        <sequence type="described" ref="VSP_023584"/>
    </isoform>
    <isoform>
        <id>Q969Y2-4</id>
        <name>4</name>
        <sequence type="described" ref="VSP_045050"/>
    </isoform>
</comment>
<comment type="tissue specificity">
    <text evidence="3">Ubiquitously expressed.</text>
</comment>
<comment type="polymorphism">
    <text>Val-250 variation may influence aminoglycoside-induced deafness (AID) [MIM:580000]. AID is characterized by deafness, varying from profond congenital hearing loss to normal hearing, and is caused by homoplasmic A1555G mutation in the mitochondrial 12S rRNA. Val-250 may affect the accuracy of codon-anticodon interaction, leading to modulate the translational efficiency and thereby affecting the severity of deafness in patients homozygous for 12S rRNA A1555G mutation.</text>
</comment>
<comment type="disease" evidence="8 9 11">
    <disease id="DI-04332">
        <name>Combined oxidative phosphorylation deficiency 23</name>
        <acronym>COXPD23</acronym>
        <description>An autosomal recessive mitochondrial disorder characterized by hypertrophic cardiomyopathy and/or neurologic symptoms with onset in early childhood. Disease features include hypertrophic cardiomyopathy, hypotonia, delayed psychomotor development, lactic acidosis, impaired activities of respiratory complexes I and IV, and defective translation of mitochondrial proteins. Disease severity is variable, ranging from death in early infancy to survival into the second decade of life.</description>
        <dbReference type="MIM" id="616198"/>
    </disease>
    <text>The disease is caused by variants affecting the gene represented in this entry.</text>
</comment>
<comment type="similarity">
    <text evidence="15">Belongs to the TRAFAC class TrmE-Era-EngA-EngB-Septin-like GTPase superfamily. TrmE GTPase family.</text>
</comment>
<reference key="1">
    <citation type="journal article" date="2002" name="Mol. Cell. Biol.">
        <title>A human mitochondrial GTP binding protein related to tRNA modification may modulate phenotypic expression of the deafness-associated mitochondrial 12S rRNA mutation.</title>
        <authorList>
            <person name="Li X."/>
            <person name="Guan M.-X."/>
        </authorList>
    </citation>
    <scope>NUCLEOTIDE SEQUENCE [GENOMIC DNA / MRNA] (ISOFORMS 1; 2 AND 3)</scope>
    <scope>SUBCELLULAR LOCATION</scope>
    <scope>TISSUE SPECIFICITY</scope>
    <scope>POSSIBLE INVOLVEMENT IN AID</scope>
    <scope>VARIANT ALA-250</scope>
</reference>
<reference key="2">
    <citation type="journal article" date="2004" name="Nat. Genet.">
        <title>Complete sequencing and characterization of 21,243 full-length human cDNAs.</title>
        <authorList>
            <person name="Ota T."/>
            <person name="Suzuki Y."/>
            <person name="Nishikawa T."/>
            <person name="Otsuki T."/>
            <person name="Sugiyama T."/>
            <person name="Irie R."/>
            <person name="Wakamatsu A."/>
            <person name="Hayashi K."/>
            <person name="Sato H."/>
            <person name="Nagai K."/>
            <person name="Kimura K."/>
            <person name="Makita H."/>
            <person name="Sekine M."/>
            <person name="Obayashi M."/>
            <person name="Nishi T."/>
            <person name="Shibahara T."/>
            <person name="Tanaka T."/>
            <person name="Ishii S."/>
            <person name="Yamamoto J."/>
            <person name="Saito K."/>
            <person name="Kawai Y."/>
            <person name="Isono Y."/>
            <person name="Nakamura Y."/>
            <person name="Nagahari K."/>
            <person name="Murakami K."/>
            <person name="Yasuda T."/>
            <person name="Iwayanagi T."/>
            <person name="Wagatsuma M."/>
            <person name="Shiratori A."/>
            <person name="Sudo H."/>
            <person name="Hosoiri T."/>
            <person name="Kaku Y."/>
            <person name="Kodaira H."/>
            <person name="Kondo H."/>
            <person name="Sugawara M."/>
            <person name="Takahashi M."/>
            <person name="Kanda K."/>
            <person name="Yokoi T."/>
            <person name="Furuya T."/>
            <person name="Kikkawa E."/>
            <person name="Omura Y."/>
            <person name="Abe K."/>
            <person name="Kamihara K."/>
            <person name="Katsuta N."/>
            <person name="Sato K."/>
            <person name="Tanikawa M."/>
            <person name="Yamazaki M."/>
            <person name="Ninomiya K."/>
            <person name="Ishibashi T."/>
            <person name="Yamashita H."/>
            <person name="Murakawa K."/>
            <person name="Fujimori K."/>
            <person name="Tanai H."/>
            <person name="Kimata M."/>
            <person name="Watanabe M."/>
            <person name="Hiraoka S."/>
            <person name="Chiba Y."/>
            <person name="Ishida S."/>
            <person name="Ono Y."/>
            <person name="Takiguchi S."/>
            <person name="Watanabe S."/>
            <person name="Yosida M."/>
            <person name="Hotuta T."/>
            <person name="Kusano J."/>
            <person name="Kanehori K."/>
            <person name="Takahashi-Fujii A."/>
            <person name="Hara H."/>
            <person name="Tanase T.-O."/>
            <person name="Nomura Y."/>
            <person name="Togiya S."/>
            <person name="Komai F."/>
            <person name="Hara R."/>
            <person name="Takeuchi K."/>
            <person name="Arita M."/>
            <person name="Imose N."/>
            <person name="Musashino K."/>
            <person name="Yuuki H."/>
            <person name="Oshima A."/>
            <person name="Sasaki N."/>
            <person name="Aotsuka S."/>
            <person name="Yoshikawa Y."/>
            <person name="Matsunawa H."/>
            <person name="Ichihara T."/>
            <person name="Shiohata N."/>
            <person name="Sano S."/>
            <person name="Moriya S."/>
            <person name="Momiyama H."/>
            <person name="Satoh N."/>
            <person name="Takami S."/>
            <person name="Terashima Y."/>
            <person name="Suzuki O."/>
            <person name="Nakagawa S."/>
            <person name="Senoh A."/>
            <person name="Mizoguchi H."/>
            <person name="Goto Y."/>
            <person name="Shimizu F."/>
            <person name="Wakebe H."/>
            <person name="Hishigaki H."/>
            <person name="Watanabe T."/>
            <person name="Sugiyama A."/>
            <person name="Takemoto M."/>
            <person name="Kawakami B."/>
            <person name="Yamazaki M."/>
            <person name="Watanabe K."/>
            <person name="Kumagai A."/>
            <person name="Itakura S."/>
            <person name="Fukuzumi Y."/>
            <person name="Fujimori Y."/>
            <person name="Komiyama M."/>
            <person name="Tashiro H."/>
            <person name="Tanigami A."/>
            <person name="Fujiwara T."/>
            <person name="Ono T."/>
            <person name="Yamada K."/>
            <person name="Fujii Y."/>
            <person name="Ozaki K."/>
            <person name="Hirao M."/>
            <person name="Ohmori Y."/>
            <person name="Kawabata A."/>
            <person name="Hikiji T."/>
            <person name="Kobatake N."/>
            <person name="Inagaki H."/>
            <person name="Ikema Y."/>
            <person name="Okamoto S."/>
            <person name="Okitani R."/>
            <person name="Kawakami T."/>
            <person name="Noguchi S."/>
            <person name="Itoh T."/>
            <person name="Shigeta K."/>
            <person name="Senba T."/>
            <person name="Matsumura K."/>
            <person name="Nakajima Y."/>
            <person name="Mizuno T."/>
            <person name="Morinaga M."/>
            <person name="Sasaki M."/>
            <person name="Togashi T."/>
            <person name="Oyama M."/>
            <person name="Hata H."/>
            <person name="Watanabe M."/>
            <person name="Komatsu T."/>
            <person name="Mizushima-Sugano J."/>
            <person name="Satoh T."/>
            <person name="Shirai Y."/>
            <person name="Takahashi Y."/>
            <person name="Nakagawa K."/>
            <person name="Okumura K."/>
            <person name="Nagase T."/>
            <person name="Nomura N."/>
            <person name="Kikuchi H."/>
            <person name="Masuho Y."/>
            <person name="Yamashita R."/>
            <person name="Nakai K."/>
            <person name="Yada T."/>
            <person name="Nakamura Y."/>
            <person name="Ohara O."/>
            <person name="Isogai T."/>
            <person name="Sugano S."/>
        </authorList>
    </citation>
    <scope>NUCLEOTIDE SEQUENCE [LARGE SCALE MRNA] (ISOFORMS 1 AND 4)</scope>
    <scope>VARIANT ALA-250</scope>
</reference>
<reference key="3">
    <citation type="journal article" date="2004" name="Nature">
        <title>The DNA sequence and biology of human chromosome 19.</title>
        <authorList>
            <person name="Grimwood J."/>
            <person name="Gordon L.A."/>
            <person name="Olsen A.S."/>
            <person name="Terry A."/>
            <person name="Schmutz J."/>
            <person name="Lamerdin J.E."/>
            <person name="Hellsten U."/>
            <person name="Goodstein D."/>
            <person name="Couronne O."/>
            <person name="Tran-Gyamfi M."/>
            <person name="Aerts A."/>
            <person name="Altherr M."/>
            <person name="Ashworth L."/>
            <person name="Bajorek E."/>
            <person name="Black S."/>
            <person name="Branscomb E."/>
            <person name="Caenepeel S."/>
            <person name="Carrano A.V."/>
            <person name="Caoile C."/>
            <person name="Chan Y.M."/>
            <person name="Christensen M."/>
            <person name="Cleland C.A."/>
            <person name="Copeland A."/>
            <person name="Dalin E."/>
            <person name="Dehal P."/>
            <person name="Denys M."/>
            <person name="Detter J.C."/>
            <person name="Escobar J."/>
            <person name="Flowers D."/>
            <person name="Fotopulos D."/>
            <person name="Garcia C."/>
            <person name="Georgescu A.M."/>
            <person name="Glavina T."/>
            <person name="Gomez M."/>
            <person name="Gonzales E."/>
            <person name="Groza M."/>
            <person name="Hammon N."/>
            <person name="Hawkins T."/>
            <person name="Haydu L."/>
            <person name="Ho I."/>
            <person name="Huang W."/>
            <person name="Israni S."/>
            <person name="Jett J."/>
            <person name="Kadner K."/>
            <person name="Kimball H."/>
            <person name="Kobayashi A."/>
            <person name="Larionov V."/>
            <person name="Leem S.-H."/>
            <person name="Lopez F."/>
            <person name="Lou Y."/>
            <person name="Lowry S."/>
            <person name="Malfatti S."/>
            <person name="Martinez D."/>
            <person name="McCready P.M."/>
            <person name="Medina C."/>
            <person name="Morgan J."/>
            <person name="Nelson K."/>
            <person name="Nolan M."/>
            <person name="Ovcharenko I."/>
            <person name="Pitluck S."/>
            <person name="Pollard M."/>
            <person name="Popkie A.P."/>
            <person name="Predki P."/>
            <person name="Quan G."/>
            <person name="Ramirez L."/>
            <person name="Rash S."/>
            <person name="Retterer J."/>
            <person name="Rodriguez A."/>
            <person name="Rogers S."/>
            <person name="Salamov A."/>
            <person name="Salazar A."/>
            <person name="She X."/>
            <person name="Smith D."/>
            <person name="Slezak T."/>
            <person name="Solovyev V."/>
            <person name="Thayer N."/>
            <person name="Tice H."/>
            <person name="Tsai M."/>
            <person name="Ustaszewska A."/>
            <person name="Vo N."/>
            <person name="Wagner M."/>
            <person name="Wheeler J."/>
            <person name="Wu K."/>
            <person name="Xie G."/>
            <person name="Yang J."/>
            <person name="Dubchak I."/>
            <person name="Furey T.S."/>
            <person name="DeJong P."/>
            <person name="Dickson M."/>
            <person name="Gordon D."/>
            <person name="Eichler E.E."/>
            <person name="Pennacchio L.A."/>
            <person name="Richardson P."/>
            <person name="Stubbs L."/>
            <person name="Rokhsar D.S."/>
            <person name="Myers R.M."/>
            <person name="Rubin E.M."/>
            <person name="Lucas S.M."/>
        </authorList>
    </citation>
    <scope>NUCLEOTIDE SEQUENCE [LARGE SCALE GENOMIC DNA]</scope>
    <scope>VARIANT ALA-250</scope>
</reference>
<reference key="4">
    <citation type="submission" date="2005-07" db="EMBL/GenBank/DDBJ databases">
        <authorList>
            <person name="Mural R.J."/>
            <person name="Istrail S."/>
            <person name="Sutton G.G."/>
            <person name="Florea L."/>
            <person name="Halpern A.L."/>
            <person name="Mobarry C.M."/>
            <person name="Lippert R."/>
            <person name="Walenz B."/>
            <person name="Shatkay H."/>
            <person name="Dew I."/>
            <person name="Miller J.R."/>
            <person name="Flanigan M.J."/>
            <person name="Edwards N.J."/>
            <person name="Bolanos R."/>
            <person name="Fasulo D."/>
            <person name="Halldorsson B.V."/>
            <person name="Hannenhalli S."/>
            <person name="Turner R."/>
            <person name="Yooseph S."/>
            <person name="Lu F."/>
            <person name="Nusskern D.R."/>
            <person name="Shue B.C."/>
            <person name="Zheng X.H."/>
            <person name="Zhong F."/>
            <person name="Delcher A.L."/>
            <person name="Huson D.H."/>
            <person name="Kravitz S.A."/>
            <person name="Mouchard L."/>
            <person name="Reinert K."/>
            <person name="Remington K.A."/>
            <person name="Clark A.G."/>
            <person name="Waterman M.S."/>
            <person name="Eichler E.E."/>
            <person name="Adams M.D."/>
            <person name="Hunkapiller M.W."/>
            <person name="Myers E.W."/>
            <person name="Venter J.C."/>
        </authorList>
    </citation>
    <scope>NUCLEOTIDE SEQUENCE [LARGE SCALE GENOMIC DNA]</scope>
</reference>
<reference key="5">
    <citation type="journal article" date="2004" name="Genome Res.">
        <title>The status, quality, and expansion of the NIH full-length cDNA project: the Mammalian Gene Collection (MGC).</title>
        <authorList>
            <consortium name="The MGC Project Team"/>
        </authorList>
    </citation>
    <scope>NUCLEOTIDE SEQUENCE [LARGE SCALE MRNA]</scope>
    <scope>VARIANTS ALA-250 AND HIS-368</scope>
    <source>
        <tissue>Brain</tissue>
        <tissue>Lymph</tissue>
    </source>
</reference>
<reference key="6">
    <citation type="journal article" date="2004" name="Mol. Genet. Metab.">
        <title>Phenotype of non-syndromic deafness associated with the mitochondrial A1555G mutation is modulated by mitochondrial RNA modifying enzymes MTO1 and GTPBP3.</title>
        <authorList>
            <person name="Bykhovskaya Y."/>
            <person name="Mengesha E."/>
            <person name="Wang D."/>
            <person name="Yang H."/>
            <person name="Estivill X."/>
            <person name="Shohat M."/>
            <person name="Fischel-Ghodsian N."/>
        </authorList>
    </citation>
    <scope>INVOLVEMENT IN AID</scope>
    <scope>VARIANT ALA-250</scope>
</reference>
<reference key="7">
    <citation type="journal article" date="2014" name="Am. J. Hum. Genet.">
        <title>Mutations in GTPBP3 cause a mitochondrial translation defect associated with hypertrophic cardiomyopathy, lactic acidosis, and encephalopathy.</title>
        <authorList>
            <person name="Kopajtich R."/>
            <person name="Nicholls T.J."/>
            <person name="Rorbach J."/>
            <person name="Metodiev M.D."/>
            <person name="Freisinger P."/>
            <person name="Mandel H."/>
            <person name="Vanlander A."/>
            <person name="Ghezzi D."/>
            <person name="Carrozzo R."/>
            <person name="Taylor R.W."/>
            <person name="Marquard K."/>
            <person name="Murayama K."/>
            <person name="Wieland T."/>
            <person name="Schwarzmayr T."/>
            <person name="Mayr J.A."/>
            <person name="Pearce S.F."/>
            <person name="Powell C.A."/>
            <person name="Saada A."/>
            <person name="Ohtake A."/>
            <person name="Invernizzi F."/>
            <person name="Lamantea E."/>
            <person name="Sommerville E.W."/>
            <person name="Pyle A."/>
            <person name="Chinnery P.F."/>
            <person name="Crushell E."/>
            <person name="Okazaki Y."/>
            <person name="Kohda M."/>
            <person name="Kishita Y."/>
            <person name="Tokuzawa Y."/>
            <person name="Assouline Z."/>
            <person name="Rio M."/>
            <person name="Feillet F."/>
            <person name="Mousson de Camaret B."/>
            <person name="Chretien D."/>
            <person name="Munnich A."/>
            <person name="Menten B."/>
            <person name="Sante T."/>
            <person name="Smet J."/>
            <person name="Regal L."/>
            <person name="Lorber A."/>
            <person name="Khoury A."/>
            <person name="Zeviani M."/>
            <person name="Strom T.M."/>
            <person name="Meitinger T."/>
            <person name="Bertini E.S."/>
            <person name="Van Coster R."/>
            <person name="Klopstock T."/>
            <person name="Rotig A."/>
            <person name="Haack T.B."/>
            <person name="Minczuk M."/>
            <person name="Prokisch H."/>
        </authorList>
    </citation>
    <scope>INVOLVEMENT IN COXPD23</scope>
    <scope>VARIANTS COXPD23 LEU-3; LYS-142; VAL-159; PRO-162; GLY-222; HIS-257; 312-GLY--VAL-319 DEL; HIS-337 AND LYS-459</scope>
    <scope>VARIANTS LYS-225 AND PRO-322</scope>
</reference>
<reference key="8">
    <citation type="journal article" date="2015" name="Proteomics">
        <title>N-terminome analysis of the human mitochondrial proteome.</title>
        <authorList>
            <person name="Vaca Jacome A.S."/>
            <person name="Rabilloud T."/>
            <person name="Schaeffer-Reiss C."/>
            <person name="Rompais M."/>
            <person name="Ayoub D."/>
            <person name="Lane L."/>
            <person name="Bairoch A."/>
            <person name="Van Dorsselaer A."/>
            <person name="Carapito C."/>
        </authorList>
    </citation>
    <scope>IDENTIFICATION BY MASS SPECTROMETRY [LARGE SCALE ANALYSIS]</scope>
</reference>
<reference key="9">
    <citation type="journal article" date="2018" name="Nucleic Acids Res.">
        <title>Metabolic and chemical regulation of tRNA modification associated with taurine deficiency and human disease.</title>
        <authorList>
            <person name="Asano K."/>
            <person name="Suzuki T."/>
            <person name="Saito A."/>
            <person name="Wei F.Y."/>
            <person name="Ikeuchi Y."/>
            <person name="Numata T."/>
            <person name="Tanaka R."/>
            <person name="Yamane Y."/>
            <person name="Yamamoto T."/>
            <person name="Goto T."/>
            <person name="Kishita Y."/>
            <person name="Murayama K."/>
            <person name="Ohtake A."/>
            <person name="Okazaki Y."/>
            <person name="Tomizawa K."/>
            <person name="Sakaguchi Y."/>
            <person name="Suzuki T."/>
        </authorList>
    </citation>
    <scope>FUNCTION</scope>
    <scope>CATALYTIC ACTIVITY</scope>
    <scope>INTERACTION WITH MTO1</scope>
</reference>
<reference key="10">
    <citation type="journal article" date="2021" name="Nucleic Acids Res.">
        <title>The human tRNA taurine modification enzyme GTPBP3 is an active GTPase linked to mitochondrial diseases.</title>
        <authorList>
            <person name="Peng G.X."/>
            <person name="Zhang Y."/>
            <person name="Wang Q.Q."/>
            <person name="Li Q.R."/>
            <person name="Xu H."/>
            <person name="Wang E.D."/>
            <person name="Zhou X.L."/>
        </authorList>
    </citation>
    <scope>PROTEIN SEQUENCE OF 21-25</scope>
    <scope>FUNCTION</scope>
    <scope>CATALYTIC ACTIVITY</scope>
    <scope>BIOPHYSICOCHEMICAL PROPERTIES</scope>
    <scope>HOMODIMER</scope>
    <scope>INTERACTION WITH MTO1</scope>
    <scope>MUTAGENESIS OF ARG-136; GLU-142; GLU-159; GLU-225; ASN-259; GLU-315; ALA-322 AND ARG-431</scope>
    <scope>VARIANTS COXPD23 LEU-3; VAL-159; PRO-162; HIS-257 AND LYS-459</scope>
    <scope>VARIANT PRO-322</scope>
    <scope>SUBCELLULAR LOCATION</scope>
</reference>
<reference key="11">
    <citation type="journal article" date="2016" name="PLoS Genet.">
        <title>A comprehensive genomic analysis reveals the genetic landscape of mitochondrial respiratory chain complex deficiencies.</title>
        <authorList>
            <person name="Kohda M."/>
            <person name="Tokuzawa Y."/>
            <person name="Kishita Y."/>
            <person name="Nyuzuki H."/>
            <person name="Moriyama Y."/>
            <person name="Mizuno Y."/>
            <person name="Hirata T."/>
            <person name="Yatsuka Y."/>
            <person name="Yamashita-Sugahara Y."/>
            <person name="Nakachi Y."/>
            <person name="Kato H."/>
            <person name="Okuda A."/>
            <person name="Tamaru S."/>
            <person name="Borna N.N."/>
            <person name="Banshoya K."/>
            <person name="Aigaki T."/>
            <person name="Sato-Miyata Y."/>
            <person name="Ohnuma K."/>
            <person name="Suzuki T."/>
            <person name="Nagao A."/>
            <person name="Maehata H."/>
            <person name="Matsuda F."/>
            <person name="Higasa K."/>
            <person name="Nagasaki M."/>
            <person name="Yasuda J."/>
            <person name="Yamamoto M."/>
            <person name="Fushimi T."/>
            <person name="Shimura M."/>
            <person name="Kaiho-Ichimoto K."/>
            <person name="Harashima H."/>
            <person name="Yamazaki T."/>
            <person name="Mori M."/>
            <person name="Murayama K."/>
            <person name="Ohtake A."/>
            <person name="Okazaki Y."/>
        </authorList>
    </citation>
    <scope>VARIANT COXPD23 LEU-3</scope>
</reference>
<dbReference type="EC" id="3.6.1.-" evidence="10 11"/>
<dbReference type="EMBL" id="AF360742">
    <property type="protein sequence ID" value="AAK39555.1"/>
    <property type="molecule type" value="mRNA"/>
</dbReference>
<dbReference type="EMBL" id="AF361481">
    <property type="protein sequence ID" value="AAK37568.1"/>
    <property type="molecule type" value="Genomic_DNA"/>
</dbReference>
<dbReference type="EMBL" id="AF360743">
    <property type="protein sequence ID" value="AAK39556.1"/>
    <property type="molecule type" value="mRNA"/>
</dbReference>
<dbReference type="EMBL" id="AF360744">
    <property type="protein sequence ID" value="AAK39557.1"/>
    <property type="molecule type" value="mRNA"/>
</dbReference>
<dbReference type="EMBL" id="AY078987">
    <property type="protein sequence ID" value="AAL85492.1"/>
    <property type="molecule type" value="mRNA"/>
</dbReference>
<dbReference type="EMBL" id="AY078988">
    <property type="protein sequence ID" value="AAL85493.1"/>
    <property type="molecule type" value="mRNA"/>
</dbReference>
<dbReference type="EMBL" id="AK027606">
    <property type="protein sequence ID" value="BAB55228.1"/>
    <property type="molecule type" value="mRNA"/>
</dbReference>
<dbReference type="EMBL" id="AK291929">
    <property type="protein sequence ID" value="BAF84618.1"/>
    <property type="molecule type" value="mRNA"/>
</dbReference>
<dbReference type="EMBL" id="AK297953">
    <property type="protein sequence ID" value="BAH12694.1"/>
    <property type="molecule type" value="mRNA"/>
</dbReference>
<dbReference type="EMBL" id="AC010463">
    <property type="status" value="NOT_ANNOTATED_CDS"/>
    <property type="molecule type" value="Genomic_DNA"/>
</dbReference>
<dbReference type="EMBL" id="CH471106">
    <property type="protein sequence ID" value="EAW84597.1"/>
    <property type="molecule type" value="Genomic_DNA"/>
</dbReference>
<dbReference type="EMBL" id="BC017207">
    <property type="protein sequence ID" value="AAH17207.1"/>
    <property type="molecule type" value="mRNA"/>
</dbReference>
<dbReference type="EMBL" id="BC019261">
    <property type="protein sequence ID" value="AAH19261.1"/>
    <property type="molecule type" value="mRNA"/>
</dbReference>
<dbReference type="CCDS" id="CCDS32950.1">
    <molecule id="Q969Y2-2"/>
</dbReference>
<dbReference type="CCDS" id="CCDS32951.1">
    <molecule id="Q969Y2-1"/>
</dbReference>
<dbReference type="CCDS" id="CCDS56088.1">
    <molecule id="Q969Y2-4"/>
</dbReference>
<dbReference type="CCDS" id="CCDS59364.1">
    <molecule id="Q969Y2-3"/>
</dbReference>
<dbReference type="RefSeq" id="NP_001122327.1">
    <molecule id="Q969Y2-3"/>
    <property type="nucleotide sequence ID" value="NM_001128855.3"/>
</dbReference>
<dbReference type="RefSeq" id="NP_001182351.1">
    <molecule id="Q969Y2-4"/>
    <property type="nucleotide sequence ID" value="NM_001195422.1"/>
</dbReference>
<dbReference type="RefSeq" id="NP_116009.2">
    <molecule id="Q969Y2-1"/>
    <property type="nucleotide sequence ID" value="NM_032620.4"/>
</dbReference>
<dbReference type="RefSeq" id="NP_598399.2">
    <molecule id="Q969Y2-2"/>
    <property type="nucleotide sequence ID" value="NM_133644.4"/>
</dbReference>
<dbReference type="SMR" id="Q969Y2"/>
<dbReference type="BioGRID" id="124216">
    <property type="interactions" value="88"/>
</dbReference>
<dbReference type="FunCoup" id="Q969Y2">
    <property type="interactions" value="1593"/>
</dbReference>
<dbReference type="IntAct" id="Q969Y2">
    <property type="interactions" value="54"/>
</dbReference>
<dbReference type="MINT" id="Q969Y2"/>
<dbReference type="STRING" id="9606.ENSP00000351644"/>
<dbReference type="GlyGen" id="Q969Y2">
    <property type="glycosylation" value="1 site, 1 O-linked glycan (1 site)"/>
</dbReference>
<dbReference type="iPTMnet" id="Q969Y2"/>
<dbReference type="PhosphoSitePlus" id="Q969Y2"/>
<dbReference type="SwissPalm" id="Q969Y2"/>
<dbReference type="BioMuta" id="GTPBP3"/>
<dbReference type="DMDM" id="313104112"/>
<dbReference type="jPOST" id="Q969Y2"/>
<dbReference type="MassIVE" id="Q969Y2"/>
<dbReference type="PaxDb" id="9606-ENSP00000351644"/>
<dbReference type="PeptideAtlas" id="Q969Y2"/>
<dbReference type="ProteomicsDB" id="1268"/>
<dbReference type="ProteomicsDB" id="75877">
    <molecule id="Q969Y2-1"/>
</dbReference>
<dbReference type="ProteomicsDB" id="75878">
    <molecule id="Q969Y2-2"/>
</dbReference>
<dbReference type="ProteomicsDB" id="75879">
    <molecule id="Q969Y2-3"/>
</dbReference>
<dbReference type="Pumba" id="Q969Y2"/>
<dbReference type="Antibodypedia" id="27650">
    <property type="antibodies" value="107 antibodies from 20 providers"/>
</dbReference>
<dbReference type="DNASU" id="84705"/>
<dbReference type="Ensembl" id="ENST00000324894.13">
    <molecule id="Q969Y2-1"/>
    <property type="protein sequence ID" value="ENSP00000313818.7"/>
    <property type="gene ID" value="ENSG00000130299.17"/>
</dbReference>
<dbReference type="Ensembl" id="ENST00000358792.11">
    <molecule id="Q969Y2-2"/>
    <property type="protein sequence ID" value="ENSP00000351644.6"/>
    <property type="gene ID" value="ENSG00000130299.17"/>
</dbReference>
<dbReference type="Ensembl" id="ENST00000361619.9">
    <molecule id="Q969Y2-4"/>
    <property type="protein sequence ID" value="ENSP00000354598.4"/>
    <property type="gene ID" value="ENSG00000130299.17"/>
</dbReference>
<dbReference type="Ensembl" id="ENST00000600625.5">
    <molecule id="Q969Y2-3"/>
    <property type="protein sequence ID" value="ENSP00000473150.1"/>
    <property type="gene ID" value="ENSG00000130299.17"/>
</dbReference>
<dbReference type="GeneID" id="84705"/>
<dbReference type="KEGG" id="hsa:84705"/>
<dbReference type="MANE-Select" id="ENST00000324894.13">
    <property type="protein sequence ID" value="ENSP00000313818.7"/>
    <property type="RefSeq nucleotide sequence ID" value="NM_032620.4"/>
    <property type="RefSeq protein sequence ID" value="NP_116009.2"/>
</dbReference>
<dbReference type="UCSC" id="uc002ngg.5">
    <molecule id="Q969Y2-1"/>
    <property type="organism name" value="human"/>
</dbReference>
<dbReference type="AGR" id="HGNC:14880"/>
<dbReference type="CTD" id="84705"/>
<dbReference type="DisGeNET" id="84705"/>
<dbReference type="GeneCards" id="GTPBP3"/>
<dbReference type="HGNC" id="HGNC:14880">
    <property type="gene designation" value="GTPBP3"/>
</dbReference>
<dbReference type="HPA" id="ENSG00000130299">
    <property type="expression patterns" value="Low tissue specificity"/>
</dbReference>
<dbReference type="MalaCards" id="GTPBP3"/>
<dbReference type="MIM" id="580000">
    <property type="type" value="phenotype"/>
</dbReference>
<dbReference type="MIM" id="608536">
    <property type="type" value="gene"/>
</dbReference>
<dbReference type="MIM" id="616198">
    <property type="type" value="phenotype"/>
</dbReference>
<dbReference type="neXtProt" id="NX_Q969Y2"/>
<dbReference type="OpenTargets" id="ENSG00000130299"/>
<dbReference type="Orphanet" id="444013">
    <property type="disease" value="Combined oxidative phosphorylation defect type 23"/>
</dbReference>
<dbReference type="PharmGKB" id="PA134883205"/>
<dbReference type="VEuPathDB" id="HostDB:ENSG00000130299"/>
<dbReference type="eggNOG" id="KOG1191">
    <property type="taxonomic scope" value="Eukaryota"/>
</dbReference>
<dbReference type="GeneTree" id="ENSGT00390000016851"/>
<dbReference type="HOGENOM" id="CLU_019624_3_1_1"/>
<dbReference type="InParanoid" id="Q969Y2"/>
<dbReference type="OMA" id="EFHCHGG"/>
<dbReference type="OrthoDB" id="188276at2759"/>
<dbReference type="PAN-GO" id="Q969Y2">
    <property type="GO annotations" value="4 GO annotations based on evolutionary models"/>
</dbReference>
<dbReference type="PhylomeDB" id="Q969Y2"/>
<dbReference type="TreeFam" id="TF313153"/>
<dbReference type="PathwayCommons" id="Q969Y2"/>
<dbReference type="Reactome" id="R-HSA-6787450">
    <property type="pathway name" value="tRNA modification in the mitochondrion"/>
</dbReference>
<dbReference type="SignaLink" id="Q969Y2"/>
<dbReference type="BioGRID-ORCS" id="84705">
    <property type="hits" value="48 hits in 1161 CRISPR screens"/>
</dbReference>
<dbReference type="ChiTaRS" id="GTPBP3">
    <property type="organism name" value="human"/>
</dbReference>
<dbReference type="GeneWiki" id="GTPBP3"/>
<dbReference type="GenomeRNAi" id="84705"/>
<dbReference type="Pharos" id="Q969Y2">
    <property type="development level" value="Tbio"/>
</dbReference>
<dbReference type="PRO" id="PR:Q969Y2"/>
<dbReference type="Proteomes" id="UP000005640">
    <property type="component" value="Chromosome 19"/>
</dbReference>
<dbReference type="RNAct" id="Q969Y2">
    <property type="molecule type" value="protein"/>
</dbReference>
<dbReference type="Bgee" id="ENSG00000130299">
    <property type="expression patterns" value="Expressed in buccal mucosa cell and 186 other cell types or tissues"/>
</dbReference>
<dbReference type="ExpressionAtlas" id="Q969Y2">
    <property type="expression patterns" value="baseline and differential"/>
</dbReference>
<dbReference type="GO" id="GO:0005737">
    <property type="term" value="C:cytoplasm"/>
    <property type="evidence" value="ECO:0000314"/>
    <property type="project" value="UniProtKB"/>
</dbReference>
<dbReference type="GO" id="GO:0005739">
    <property type="term" value="C:mitochondrion"/>
    <property type="evidence" value="ECO:0000314"/>
    <property type="project" value="HPA"/>
</dbReference>
<dbReference type="GO" id="GO:0005634">
    <property type="term" value="C:nucleus"/>
    <property type="evidence" value="ECO:0000314"/>
    <property type="project" value="UniProtKB"/>
</dbReference>
<dbReference type="GO" id="GO:1990234">
    <property type="term" value="C:transferase complex"/>
    <property type="evidence" value="ECO:0000353"/>
    <property type="project" value="UniProtKB"/>
</dbReference>
<dbReference type="GO" id="GO:0005525">
    <property type="term" value="F:GTP binding"/>
    <property type="evidence" value="ECO:0007669"/>
    <property type="project" value="UniProtKB-KW"/>
</dbReference>
<dbReference type="GO" id="GO:0003924">
    <property type="term" value="F:GTPase activity"/>
    <property type="evidence" value="ECO:0000315"/>
    <property type="project" value="UniProtKB"/>
</dbReference>
<dbReference type="GO" id="GO:0160236">
    <property type="term" value="F:tRNA 5-taurinomethyluridine synthase activity"/>
    <property type="evidence" value="ECO:0000315"/>
    <property type="project" value="UniProtKB"/>
</dbReference>
<dbReference type="GO" id="GO:0070899">
    <property type="term" value="P:mitochondrial tRNA wobble uridine modification"/>
    <property type="evidence" value="ECO:0000315"/>
    <property type="project" value="UniProtKB"/>
</dbReference>
<dbReference type="GO" id="GO:0030488">
    <property type="term" value="P:tRNA methylation"/>
    <property type="evidence" value="ECO:0000318"/>
    <property type="project" value="GO_Central"/>
</dbReference>
<dbReference type="GO" id="GO:0002098">
    <property type="term" value="P:tRNA wobble uridine modification"/>
    <property type="evidence" value="ECO:0000318"/>
    <property type="project" value="GO_Central"/>
</dbReference>
<dbReference type="CDD" id="cd04164">
    <property type="entry name" value="trmE"/>
    <property type="match status" value="1"/>
</dbReference>
<dbReference type="CDD" id="cd14858">
    <property type="entry name" value="TrmE_N"/>
    <property type="match status" value="1"/>
</dbReference>
<dbReference type="FunFam" id="3.30.1360.120:FF:000007">
    <property type="entry name" value="tRNA modification GTPase GTPBP3, mitochondrial"/>
    <property type="match status" value="1"/>
</dbReference>
<dbReference type="FunFam" id="3.40.50.300:FF:000924">
    <property type="entry name" value="tRNA modification GTPase GTPBP3, mitochondrial"/>
    <property type="match status" value="1"/>
</dbReference>
<dbReference type="FunFam" id="1.20.120.430:FF:000010">
    <property type="entry name" value="tRNA modification GTPase GTPBP3, mitochondrial isoform X1"/>
    <property type="match status" value="1"/>
</dbReference>
<dbReference type="Gene3D" id="3.40.50.300">
    <property type="entry name" value="P-loop containing nucleotide triphosphate hydrolases"/>
    <property type="match status" value="1"/>
</dbReference>
<dbReference type="Gene3D" id="3.30.1360.120">
    <property type="entry name" value="Probable tRNA modification gtpase trme, domain 1"/>
    <property type="match status" value="1"/>
</dbReference>
<dbReference type="Gene3D" id="1.20.120.430">
    <property type="entry name" value="tRNA modification GTPase MnmE domain 2"/>
    <property type="match status" value="1"/>
</dbReference>
<dbReference type="HAMAP" id="MF_00379">
    <property type="entry name" value="GTPase_MnmE"/>
    <property type="match status" value="1"/>
</dbReference>
<dbReference type="InterPro" id="IPR031168">
    <property type="entry name" value="G_TrmE"/>
</dbReference>
<dbReference type="InterPro" id="IPR006073">
    <property type="entry name" value="GTP-bd"/>
</dbReference>
<dbReference type="InterPro" id="IPR018948">
    <property type="entry name" value="GTP-bd_TrmE_N"/>
</dbReference>
<dbReference type="InterPro" id="IPR004520">
    <property type="entry name" value="GTPase_MnmE"/>
</dbReference>
<dbReference type="InterPro" id="IPR027368">
    <property type="entry name" value="MnmE_dom2"/>
</dbReference>
<dbReference type="InterPro" id="IPR025867">
    <property type="entry name" value="MnmE_helical"/>
</dbReference>
<dbReference type="InterPro" id="IPR027417">
    <property type="entry name" value="P-loop_NTPase"/>
</dbReference>
<dbReference type="InterPro" id="IPR005225">
    <property type="entry name" value="Small_GTP-bd"/>
</dbReference>
<dbReference type="InterPro" id="IPR027266">
    <property type="entry name" value="TrmE/GcvT_dom1"/>
</dbReference>
<dbReference type="NCBIfam" id="NF003661">
    <property type="entry name" value="PRK05291.1-3"/>
    <property type="match status" value="1"/>
</dbReference>
<dbReference type="NCBIfam" id="TIGR00231">
    <property type="entry name" value="small_GTP"/>
    <property type="match status" value="1"/>
</dbReference>
<dbReference type="PANTHER" id="PTHR42714">
    <property type="entry name" value="TRNA MODIFICATION GTPASE GTPBP3"/>
    <property type="match status" value="1"/>
</dbReference>
<dbReference type="PANTHER" id="PTHR42714:SF2">
    <property type="entry name" value="TRNA MODIFICATION GTPASE GTPBP3, MITOCHONDRIAL"/>
    <property type="match status" value="1"/>
</dbReference>
<dbReference type="Pfam" id="PF01926">
    <property type="entry name" value="MMR_HSR1"/>
    <property type="match status" value="1"/>
</dbReference>
<dbReference type="Pfam" id="PF12631">
    <property type="entry name" value="MnmE_helical"/>
    <property type="match status" value="1"/>
</dbReference>
<dbReference type="Pfam" id="PF10396">
    <property type="entry name" value="TrmE_N"/>
    <property type="match status" value="1"/>
</dbReference>
<dbReference type="SUPFAM" id="SSF52540">
    <property type="entry name" value="P-loop containing nucleoside triphosphate hydrolases"/>
    <property type="match status" value="1"/>
</dbReference>
<dbReference type="SUPFAM" id="SSF116878">
    <property type="entry name" value="TrmE connector domain"/>
    <property type="match status" value="1"/>
</dbReference>
<dbReference type="PROSITE" id="PS51709">
    <property type="entry name" value="G_TRME"/>
    <property type="match status" value="1"/>
</dbReference>